<accession>P46569</accession>
<keyword id="KW-0472">Membrane</keyword>
<keyword id="KW-1185">Reference proteome</keyword>
<keyword id="KW-0812">Transmembrane</keyword>
<keyword id="KW-1133">Transmembrane helix</keyword>
<dbReference type="EMBL" id="Z35663">
    <property type="protein sequence ID" value="CAA84735.2"/>
    <property type="molecule type" value="Genomic_DNA"/>
</dbReference>
<dbReference type="PIR" id="T24433">
    <property type="entry name" value="T24433"/>
</dbReference>
<dbReference type="RefSeq" id="NP_497955.2">
    <property type="nucleotide sequence ID" value="NM_065554.2"/>
</dbReference>
<dbReference type="SMR" id="P46569"/>
<dbReference type="FunCoup" id="P46569">
    <property type="interactions" value="1"/>
</dbReference>
<dbReference type="PaxDb" id="6239-T04A8.2"/>
<dbReference type="EnsemblMetazoa" id="T04A8.2.1">
    <property type="protein sequence ID" value="T04A8.2.1"/>
    <property type="gene ID" value="WBGene00005169"/>
</dbReference>
<dbReference type="GeneID" id="191837"/>
<dbReference type="KEGG" id="cel:CELE_T04A8.2"/>
<dbReference type="UCSC" id="T04A8.2">
    <property type="organism name" value="c. elegans"/>
</dbReference>
<dbReference type="AGR" id="WB:WBGene00005169"/>
<dbReference type="CTD" id="191837"/>
<dbReference type="WormBase" id="T04A8.2">
    <property type="protein sequence ID" value="CE33165"/>
    <property type="gene ID" value="WBGene00005169"/>
    <property type="gene designation" value="srg-11"/>
</dbReference>
<dbReference type="eggNOG" id="ENOG502TG1C">
    <property type="taxonomic scope" value="Eukaryota"/>
</dbReference>
<dbReference type="GeneTree" id="ENSGT00970000195841"/>
<dbReference type="HOGENOM" id="CLU_061253_1_0_1"/>
<dbReference type="InParanoid" id="P46569"/>
<dbReference type="OMA" id="VYMQPTF"/>
<dbReference type="OrthoDB" id="5853002at2759"/>
<dbReference type="PhylomeDB" id="P46569"/>
<dbReference type="PRO" id="PR:P46569"/>
<dbReference type="Proteomes" id="UP000001940">
    <property type="component" value="Chromosome III"/>
</dbReference>
<dbReference type="GO" id="GO:0016020">
    <property type="term" value="C:membrane"/>
    <property type="evidence" value="ECO:0007669"/>
    <property type="project" value="UniProtKB-SubCell"/>
</dbReference>
<dbReference type="GO" id="GO:0004888">
    <property type="term" value="F:transmembrane signaling receptor activity"/>
    <property type="evidence" value="ECO:0007669"/>
    <property type="project" value="InterPro"/>
</dbReference>
<dbReference type="GO" id="GO:0007606">
    <property type="term" value="P:sensory perception of chemical stimulus"/>
    <property type="evidence" value="ECO:0007669"/>
    <property type="project" value="InterPro"/>
</dbReference>
<dbReference type="InterPro" id="IPR000609">
    <property type="entry name" value="7TM_GPCR_serpentine_rcpt_Srg"/>
</dbReference>
<dbReference type="InterPro" id="IPR051119">
    <property type="entry name" value="Nematode_SR-like"/>
</dbReference>
<dbReference type="PANTHER" id="PTHR31627:SF12">
    <property type="entry name" value="SERPENTINE RECEPTOR CLASS GAMMA-11-RELATED"/>
    <property type="match status" value="1"/>
</dbReference>
<dbReference type="PANTHER" id="PTHR31627">
    <property type="entry name" value="SERPENTINE RECEPTOR CLASS GAMMA-RELATED"/>
    <property type="match status" value="1"/>
</dbReference>
<dbReference type="Pfam" id="PF02118">
    <property type="entry name" value="Srg"/>
    <property type="match status" value="1"/>
</dbReference>
<dbReference type="PRINTS" id="PR00698">
    <property type="entry name" value="TMPROTEINSRG"/>
</dbReference>
<dbReference type="SUPFAM" id="SSF81321">
    <property type="entry name" value="Family A G protein-coupled receptor-like"/>
    <property type="match status" value="1"/>
</dbReference>
<evidence type="ECO:0000255" key="1"/>
<evidence type="ECO:0000305" key="2"/>
<organism>
    <name type="scientific">Caenorhabditis elegans</name>
    <dbReference type="NCBI Taxonomy" id="6239"/>
    <lineage>
        <taxon>Eukaryota</taxon>
        <taxon>Metazoa</taxon>
        <taxon>Ecdysozoa</taxon>
        <taxon>Nematoda</taxon>
        <taxon>Chromadorea</taxon>
        <taxon>Rhabditida</taxon>
        <taxon>Rhabditina</taxon>
        <taxon>Rhabditomorpha</taxon>
        <taxon>Rhabditoidea</taxon>
        <taxon>Rhabditidae</taxon>
        <taxon>Peloderinae</taxon>
        <taxon>Caenorhabditis</taxon>
    </lineage>
</organism>
<gene>
    <name type="primary">srg-11</name>
    <name type="ORF">T04A8.2</name>
</gene>
<reference key="1">
    <citation type="journal article" date="1998" name="Science">
        <title>Genome sequence of the nematode C. elegans: a platform for investigating biology.</title>
        <authorList>
            <consortium name="The C. elegans sequencing consortium"/>
        </authorList>
    </citation>
    <scope>NUCLEOTIDE SEQUENCE [LARGE SCALE GENOMIC DNA]</scope>
    <source>
        <strain>Bristol N2</strain>
    </source>
</reference>
<comment type="subcellular location">
    <subcellularLocation>
        <location evidence="2">Membrane</location>
        <topology evidence="2">Multi-pass membrane protein</topology>
    </subcellularLocation>
</comment>
<comment type="similarity">
    <text evidence="2">Belongs to the nematode receptor-like protein srg family.</text>
</comment>
<protein>
    <recommendedName>
        <fullName>Serpentine receptor class gamma-11</fullName>
        <shortName>Protein srg-11</shortName>
    </recommendedName>
</protein>
<feature type="chain" id="PRO_0000104561" description="Serpentine receptor class gamma-11">
    <location>
        <begin position="1"/>
        <end position="335"/>
    </location>
</feature>
<feature type="transmembrane region" description="Helical" evidence="1">
    <location>
        <begin position="33"/>
        <end position="53"/>
    </location>
</feature>
<feature type="transmembrane region" description="Helical" evidence="1">
    <location>
        <begin position="66"/>
        <end position="86"/>
    </location>
</feature>
<feature type="transmembrane region" description="Helical" evidence="1">
    <location>
        <begin position="98"/>
        <end position="118"/>
    </location>
</feature>
<feature type="transmembrane region" description="Helical" evidence="1">
    <location>
        <begin position="154"/>
        <end position="174"/>
    </location>
</feature>
<feature type="transmembrane region" description="Helical" evidence="1">
    <location>
        <begin position="202"/>
        <end position="222"/>
    </location>
</feature>
<feature type="transmembrane region" description="Helical" evidence="1">
    <location>
        <begin position="242"/>
        <end position="262"/>
    </location>
</feature>
<feature type="transmembrane region" description="Helical" evidence="1">
    <location>
        <begin position="271"/>
        <end position="291"/>
    </location>
</feature>
<sequence>MPSFRPNISNDLDTIIFECNSNYDTIVEVTKWFLQIAYLIPGGILNILLLYTILFKNSEIYASSSFFLIYSTDCFVSFSMIFLDIIGRTLVYFTPLCPIIAPMFYEPLIGFKIMMIVLHHSRACKSLIQILLVVNRMSCVIYPIRYGKMWMRPLKYLIILVFVIPFSIDWNLIISRVYMQPTFGGIYMEYIKKVAWASQSRFQLIFITIALLFTIVCTSVIFYTLVMLPKRLRNVERTLSLGTAYISMSFIILVVFQFLFAFYSDIFTTSTIFGYSLLSYDILNVGSPIIMHCVSSKLRNHVLRGSRKLSSAARVVPVSNVTSTNGWVNLIVITL</sequence>
<name>SRG11_CAEEL</name>
<proteinExistence type="inferred from homology"/>